<dbReference type="PIR" id="A02889">
    <property type="entry name" value="CYOWA3"/>
</dbReference>
<dbReference type="SMR" id="P02487"/>
<dbReference type="GlyCosmos" id="P02487">
    <property type="glycosylation" value="1 site, No reported glycans"/>
</dbReference>
<dbReference type="GO" id="GO:0005737">
    <property type="term" value="C:cytoplasm"/>
    <property type="evidence" value="ECO:0000250"/>
    <property type="project" value="UniProtKB"/>
</dbReference>
<dbReference type="GO" id="GO:0005634">
    <property type="term" value="C:nucleus"/>
    <property type="evidence" value="ECO:0000250"/>
    <property type="project" value="UniProtKB"/>
</dbReference>
<dbReference type="GO" id="GO:0046872">
    <property type="term" value="F:metal ion binding"/>
    <property type="evidence" value="ECO:0007669"/>
    <property type="project" value="UniProtKB-KW"/>
</dbReference>
<dbReference type="GO" id="GO:0005212">
    <property type="term" value="F:structural constituent of eye lens"/>
    <property type="evidence" value="ECO:0007669"/>
    <property type="project" value="UniProtKB-KW"/>
</dbReference>
<dbReference type="GO" id="GO:0051082">
    <property type="term" value="F:unfolded protein binding"/>
    <property type="evidence" value="ECO:0007669"/>
    <property type="project" value="TreeGrafter"/>
</dbReference>
<dbReference type="GO" id="GO:0002088">
    <property type="term" value="P:lens development in camera-type eye"/>
    <property type="evidence" value="ECO:0007669"/>
    <property type="project" value="TreeGrafter"/>
</dbReference>
<dbReference type="GO" id="GO:0043066">
    <property type="term" value="P:negative regulation of apoptotic process"/>
    <property type="evidence" value="ECO:0007669"/>
    <property type="project" value="TreeGrafter"/>
</dbReference>
<dbReference type="GO" id="GO:0042026">
    <property type="term" value="P:protein refolding"/>
    <property type="evidence" value="ECO:0007669"/>
    <property type="project" value="TreeGrafter"/>
</dbReference>
<dbReference type="GO" id="GO:0009408">
    <property type="term" value="P:response to heat"/>
    <property type="evidence" value="ECO:0007669"/>
    <property type="project" value="TreeGrafter"/>
</dbReference>
<dbReference type="FunFam" id="2.60.40.790:FF:000008">
    <property type="entry name" value="Alpha-crystallin A chain"/>
    <property type="match status" value="1"/>
</dbReference>
<dbReference type="Gene3D" id="2.60.40.790">
    <property type="match status" value="1"/>
</dbReference>
<dbReference type="InterPro" id="IPR002068">
    <property type="entry name" value="A-crystallin/Hsp20_dom"/>
</dbReference>
<dbReference type="InterPro" id="IPR055269">
    <property type="entry name" value="Alpha-crystallin/HSP_16"/>
</dbReference>
<dbReference type="InterPro" id="IPR001436">
    <property type="entry name" value="Alpha-crystallin/sHSP_animal"/>
</dbReference>
<dbReference type="InterPro" id="IPR003090">
    <property type="entry name" value="Alpha-crystallin_N"/>
</dbReference>
<dbReference type="InterPro" id="IPR008978">
    <property type="entry name" value="HSP20-like_chaperone"/>
</dbReference>
<dbReference type="PANTHER" id="PTHR45640:SF14">
    <property type="entry name" value="ALPHA-CRYSTALLIN A CHAIN"/>
    <property type="match status" value="1"/>
</dbReference>
<dbReference type="PANTHER" id="PTHR45640">
    <property type="entry name" value="HEAT SHOCK PROTEIN HSP-12.2-RELATED"/>
    <property type="match status" value="1"/>
</dbReference>
<dbReference type="Pfam" id="PF00525">
    <property type="entry name" value="Crystallin"/>
    <property type="match status" value="1"/>
</dbReference>
<dbReference type="Pfam" id="PF00011">
    <property type="entry name" value="HSP20"/>
    <property type="match status" value="1"/>
</dbReference>
<dbReference type="PIRSF" id="PIRSF036514">
    <property type="entry name" value="Sm_HSP_B1"/>
    <property type="match status" value="1"/>
</dbReference>
<dbReference type="PRINTS" id="PR00299">
    <property type="entry name" value="ACRYSTALLIN"/>
</dbReference>
<dbReference type="SUPFAM" id="SSF49764">
    <property type="entry name" value="HSP20-like chaperones"/>
    <property type="match status" value="1"/>
</dbReference>
<dbReference type="PROSITE" id="PS01031">
    <property type="entry name" value="SHSP"/>
    <property type="match status" value="1"/>
</dbReference>
<gene>
    <name type="primary">CRYAA</name>
</gene>
<organism>
    <name type="scientific">Bradypus variegatus</name>
    <name type="common">Brown-throated three-fingered sloth</name>
    <dbReference type="NCBI Taxonomy" id="9355"/>
    <lineage>
        <taxon>Eukaryota</taxon>
        <taxon>Metazoa</taxon>
        <taxon>Chordata</taxon>
        <taxon>Craniata</taxon>
        <taxon>Vertebrata</taxon>
        <taxon>Euteleostomi</taxon>
        <taxon>Mammalia</taxon>
        <taxon>Eutheria</taxon>
        <taxon>Xenarthra</taxon>
        <taxon>Pilosa</taxon>
        <taxon>Folivora</taxon>
        <taxon>Bradypodidae</taxon>
        <taxon>Bradypus</taxon>
    </lineage>
</organism>
<keyword id="KW-0007">Acetylation</keyword>
<keyword id="KW-0143">Chaperone</keyword>
<keyword id="KW-0963">Cytoplasm</keyword>
<keyword id="KW-0903">Direct protein sequencing</keyword>
<keyword id="KW-0273">Eye lens protein</keyword>
<keyword id="KW-0325">Glycoprotein</keyword>
<keyword id="KW-0479">Metal-binding</keyword>
<keyword id="KW-0488">Methylation</keyword>
<keyword id="KW-0539">Nucleus</keyword>
<keyword id="KW-0597">Phosphoprotein</keyword>
<keyword id="KW-0862">Zinc</keyword>
<accession>P02487</accession>
<sequence length="170" mass="19388">MDVTIQQPWFKRALGPFYPSRLFDQFFGEGLFESDLLPFLSSTISPYYRQSLFRTALDSGISEVRSDRDKFVIFLDVKHFSPEDLTVKVLGDFVEIHGKHNERQDDHGYISREFHRRYRLPTAVDQSALSCSLSADGMLTFSGPKIVDPSHSERPIPVSREEKPSSAPSS</sequence>
<reference key="1">
    <citation type="book" date="1980" name="Protides of the biological fluids, Proc. 28th colloquium">
        <title>Trends in the molecular evolution of alpha-crystallin.</title>
        <editorList>
            <person name="Peeters H."/>
        </editorList>
        <authorList>
            <person name="de Jong W.W."/>
            <person name="Zweers A."/>
            <person name="Goodman M."/>
        </authorList>
    </citation>
    <scope>PARTIAL PROTEIN SEQUENCE</scope>
</reference>
<feature type="chain" id="PRO_0000125849" description="Alpha-crystallin A chain">
    <location>
        <begin position="1"/>
        <end position="170"/>
    </location>
</feature>
<feature type="domain" description="sHSP" evidence="5">
    <location>
        <begin position="52"/>
        <end position="161"/>
    </location>
</feature>
<feature type="region of interest" description="Required for complex formation with BFSP1 and BFSP2" evidence="4">
    <location>
        <begin position="1"/>
        <end position="63"/>
    </location>
</feature>
<feature type="region of interest" description="Disordered" evidence="6">
    <location>
        <begin position="144"/>
        <end position="170"/>
    </location>
</feature>
<feature type="compositionally biased region" description="Basic and acidic residues" evidence="6">
    <location>
        <begin position="148"/>
        <end position="164"/>
    </location>
</feature>
<feature type="binding site" evidence="2">
    <location>
        <position position="100"/>
    </location>
    <ligand>
        <name>Zn(2+)</name>
        <dbReference type="ChEBI" id="CHEBI:29105"/>
        <label>1</label>
    </ligand>
</feature>
<feature type="binding site" evidence="2">
    <location>
        <position position="102"/>
    </location>
    <ligand>
        <name>Zn(2+)</name>
        <dbReference type="ChEBI" id="CHEBI:29105"/>
        <label>1</label>
    </ligand>
</feature>
<feature type="binding site" evidence="2">
    <location>
        <position position="107"/>
    </location>
    <ligand>
        <name>Zn(2+)</name>
        <dbReference type="ChEBI" id="CHEBI:29105"/>
        <label>2</label>
    </ligand>
</feature>
<feature type="binding site" evidence="2">
    <location>
        <position position="151"/>
    </location>
    <ligand>
        <name>Zn(2+)</name>
        <dbReference type="ChEBI" id="CHEBI:29105"/>
        <label>3</label>
    </ligand>
</feature>
<feature type="modified residue" description="N-acetylmethionine" evidence="3 7">
    <location>
        <position position="1"/>
    </location>
</feature>
<feature type="modified residue" description="Deamidated glutamine; partial" evidence="1">
    <location>
        <position position="6"/>
    </location>
</feature>
<feature type="modified residue" description="Phosphoserine" evidence="4">
    <location>
        <position position="45"/>
    </location>
</feature>
<feature type="modified residue" description="Deamidated glutamine; partial" evidence="1">
    <location>
        <position position="50"/>
    </location>
</feature>
<feature type="modified residue" description="N6-acetyllysine" evidence="4">
    <location>
        <position position="70"/>
    </location>
</feature>
<feature type="modified residue" description="N6-acetyllysine" evidence="4">
    <location>
        <position position="99"/>
    </location>
</feature>
<feature type="modified residue" description="Deamidated asparagine; partial" evidence="1">
    <location>
        <position position="101"/>
    </location>
</feature>
<feature type="glycosylation site" description="O-linked (GlcNAc) serine" evidence="1">
    <location>
        <position position="159"/>
    </location>
</feature>
<comment type="function">
    <text evidence="4">Contributes to the transparency and refractive index of the lens. Acts as a chaperone, preventing aggregation of various proteins under a wide range of stress conditions. Required for the correct formation of lens intermediate filaments as part of a complex composed of BFSP1, BFSP2 and CRYAA.</text>
</comment>
<comment type="subunit">
    <text evidence="2 4">Heteromer composed of three CRYAA and one CRYAB subunits. Inter-subunit bridging via zinc ions enhances stability, which is crucial as there is no protein turn over in the lens. Can also form homodimers and homotetramers (dimers of dimers) which serve as the building blocks of homooligomers (By similarity). Within homooligomers, the zinc-binding motif is created from residues of 3 different molecules. His-100 and Glu-102 from one molecule are ligands of the zinc ion, and His-107 and His-151 residues from additional molecules complete the site with tetrahedral coordination geometry (By similarity). Part of a complex required for lens intermediate filament formation composed of BFSP1, BFSP2 and CRYAA (By similarity).</text>
</comment>
<comment type="subcellular location">
    <subcellularLocation>
        <location evidence="4">Cytoplasm</location>
    </subcellularLocation>
    <subcellularLocation>
        <location evidence="4">Nucleus</location>
    </subcellularLocation>
    <text evidence="4">Translocates to the nucleus during heat shock and resides in sub-nuclear structures known as SC35 speckles or nuclear splicing speckles.</text>
</comment>
<comment type="PTM">
    <text evidence="4">Acetylation at Lys-70 may increase chaperone activity.</text>
</comment>
<comment type="PTM">
    <text evidence="4">Undergoes age-dependent proteolytical cleavage at the C-terminus.</text>
</comment>
<comment type="similarity">
    <text evidence="5">Belongs to the small heat shock protein (HSP20) family.</text>
</comment>
<proteinExistence type="evidence at protein level"/>
<protein>
    <recommendedName>
        <fullName>Alpha-crystallin A chain</fullName>
    </recommendedName>
</protein>
<evidence type="ECO:0000250" key="1"/>
<evidence type="ECO:0000250" key="2">
    <source>
        <dbReference type="UniProtKB" id="P02470"/>
    </source>
</evidence>
<evidence type="ECO:0000250" key="3">
    <source>
        <dbReference type="UniProtKB" id="P02474"/>
    </source>
</evidence>
<evidence type="ECO:0000250" key="4">
    <source>
        <dbReference type="UniProtKB" id="P02489"/>
    </source>
</evidence>
<evidence type="ECO:0000255" key="5">
    <source>
        <dbReference type="PROSITE-ProRule" id="PRU00285"/>
    </source>
</evidence>
<evidence type="ECO:0000256" key="6">
    <source>
        <dbReference type="SAM" id="MobiDB-lite"/>
    </source>
</evidence>
<evidence type="ECO:0000305" key="7"/>
<name>CRYAA_BRAVA</name>